<reference key="1">
    <citation type="journal article" date="1988" name="Nature">
        <title>The Caenorhabditis elegans lin-12 gene encodes a transmembrane protein with overall similarity to Drosophila Notch.</title>
        <authorList>
            <person name="Yochem J."/>
            <person name="Weston K."/>
            <person name="Greenwald I."/>
        </authorList>
    </citation>
    <scope>NUCLEOTIDE SEQUENCE [GENOMIC DNA]</scope>
    <scope>FUNCTION</scope>
    <source>
        <strain>Bristol N2</strain>
    </source>
</reference>
<reference key="2">
    <citation type="journal article" date="1994" name="Nature">
        <title>2.2 Mb of contiguous nucleotide sequence from chromosome III of C. elegans.</title>
        <authorList>
            <person name="Wilson R."/>
            <person name="Ainscough R."/>
            <person name="Anderson K."/>
            <person name="Baynes C."/>
            <person name="Berks M."/>
            <person name="Bonfield J."/>
            <person name="Burton J."/>
            <person name="Connell M."/>
            <person name="Copsey T."/>
            <person name="Cooper J."/>
            <person name="Coulson A."/>
            <person name="Craxton M."/>
            <person name="Dear S."/>
            <person name="Du Z."/>
            <person name="Durbin R."/>
            <person name="Favello A."/>
            <person name="Fraser A."/>
            <person name="Fulton L."/>
            <person name="Gardner A."/>
            <person name="Green P."/>
            <person name="Hawkins T."/>
            <person name="Hillier L."/>
            <person name="Jier M."/>
            <person name="Johnston L."/>
            <person name="Jones M."/>
            <person name="Kershaw J."/>
            <person name="Kirsten J."/>
            <person name="Laisster N."/>
            <person name="Latreille P."/>
            <person name="Lightning J."/>
            <person name="Lloyd C."/>
            <person name="Mortimore B."/>
            <person name="O'Callaghan M."/>
            <person name="Parsons J."/>
            <person name="Percy C."/>
            <person name="Rifken L."/>
            <person name="Roopra A."/>
            <person name="Saunders D."/>
            <person name="Shownkeen R."/>
            <person name="Sims M."/>
            <person name="Smaldon N."/>
            <person name="Smith A."/>
            <person name="Smith M."/>
            <person name="Sonnhammer E."/>
            <person name="Staden R."/>
            <person name="Sulston J."/>
            <person name="Thierry-Mieg J."/>
            <person name="Thomas K."/>
            <person name="Vaudin M."/>
            <person name="Vaughan K."/>
            <person name="Waterston R."/>
            <person name="Watson A."/>
            <person name="Weinstock L."/>
            <person name="Wilkinson-Sproat J."/>
            <person name="Wohldman P."/>
        </authorList>
    </citation>
    <scope>NUCLEOTIDE SEQUENCE [LARGE SCALE GENOMIC DNA]</scope>
    <source>
        <strain>Bristol N2</strain>
    </source>
</reference>
<reference key="3">
    <citation type="journal article" date="1998" name="Science">
        <title>Genome sequence of the nematode C. elegans: a platform for investigating biology.</title>
        <authorList>
            <consortium name="The C. elegans sequencing consortium"/>
        </authorList>
    </citation>
    <scope>NUCLEOTIDE SEQUENCE [LARGE SCALE GENOMIC DNA]</scope>
    <source>
        <strain>Bristol N2</strain>
    </source>
</reference>
<reference key="4">
    <citation type="journal article" date="1985" name="Cell">
        <title>lin-12, a nematode homeotic gene, is homologous to a set of mammalian proteins that includes epidermal growth factor.</title>
        <authorList>
            <person name="Greenwald I."/>
        </authorList>
    </citation>
    <scope>NUCLEOTIDE SEQUENCE [GENOMIC DNA] OF 173-712</scope>
    <scope>FUNCTION</scope>
</reference>
<reference key="5">
    <citation type="journal article" date="1993" name="Cell">
        <title>Intrinsic activity of the Lin-12 and Notch intracellular domains in vivo.</title>
        <authorList>
            <person name="Struhl G."/>
            <person name="Fitzgerald K."/>
            <person name="Greenwald I."/>
        </authorList>
    </citation>
    <scope>FUNCTION</scope>
</reference>
<reference key="6">
    <citation type="journal article" date="1995" name="Nature">
        <title>Facilitation of lin-12-mediated signalling by sel-12, a Caenorhabditis elegans S182 Alzheimer's disease gene.</title>
        <authorList>
            <person name="Levitan D."/>
            <person name="Greenwald I."/>
        </authorList>
    </citation>
    <scope>FUNCTION</scope>
    <scope>PROTEOLYTIC PROCESSING</scope>
</reference>
<reference key="7">
    <citation type="journal article" date="1997" name="Genes Dev.">
        <title>sel-10, a negative regulator of lin-12 activity in Caenorhabditis elegans, encodes a member of the CDC4 family of proteins.</title>
        <authorList>
            <person name="Hubbard E.J.A."/>
            <person name="Wu G."/>
            <person name="Kitajewski J."/>
            <person name="Greenwald I."/>
        </authorList>
    </citation>
    <scope>INTERACTION WITH SEL-10</scope>
</reference>
<reference key="8">
    <citation type="journal article" date="2000" name="Development">
        <title>Left-right asymmetry in C. elegans intestine organogenesis involves a LIN-12/Notch signaling pathway.</title>
        <authorList>
            <person name="Hermann G.J."/>
            <person name="Leung B."/>
            <person name="Priess J.R."/>
        </authorList>
    </citation>
    <scope>FUNCTION</scope>
</reference>
<reference key="9">
    <citation type="journal article" date="2000" name="Nature">
        <title>LAG-3 is a putative transcriptional activator in the C. elegans Notch pathway.</title>
        <authorList>
            <person name="Petcherski A.G."/>
            <person name="Kimble J."/>
        </authorList>
    </citation>
    <scope>FUNCTION</scope>
</reference>
<reference key="10">
    <citation type="journal article" date="2005" name="Dev. Biol.">
        <title>Evidence for functional redundancy between C. elegans ADAM proteins SUP-17/Kuzbanian and ADM-4/TACE.</title>
        <authorList>
            <person name="Jarriault S."/>
            <person name="Greenwald I."/>
        </authorList>
    </citation>
    <scope>FUNCTION</scope>
    <scope>PROTEOLYTIC PROCESSING</scope>
</reference>
<reference key="11">
    <citation type="journal article" date="2008" name="Development">
        <title>Notch signalling is required for both dauer maintenance and recovery in C. elegans.</title>
        <authorList>
            <person name="Ouellet J."/>
            <person name="Li S."/>
            <person name="Roy R."/>
        </authorList>
    </citation>
    <scope>FUNCTION</scope>
</reference>
<reference key="12">
    <citation type="journal article" date="2008" name="Dev. Biol.">
        <title>Dorsoventral patterning of the C. elegans postembryonic mesoderm requires both LIN-12/Notch and TGFbeta signaling.</title>
        <authorList>
            <person name="Foehr M.L."/>
            <person name="Liu J."/>
        </authorList>
    </citation>
    <scope>FUNCTION</scope>
    <scope>DEVELOPMENTAL STAGE</scope>
    <scope>MUTAGENESIS OF 400-TRP--PHE-1429</scope>
</reference>
<reference key="13">
    <citation type="journal article" date="2008" name="PLoS Biol.">
        <title>OSM-11 facilitates LIN-12 Notch signaling during Caenorhabditis elegans vulval development.</title>
        <authorList>
            <person name="Komatsu H."/>
            <person name="Chao M.Y."/>
            <person name="Larkins-Ford J."/>
            <person name="Corkins M.E."/>
            <person name="Somers G.A."/>
            <person name="Tucey T."/>
            <person name="Dionne H.M."/>
            <person name="White J.Q."/>
            <person name="Wani K."/>
            <person name="Boxem M."/>
            <person name="Hart A.C."/>
        </authorList>
    </citation>
    <scope>FUNCTION</scope>
    <scope>INTERACTION WITH LAG-2; DSL-1 AND OSM-11</scope>
    <scope>SUBCELLULAR LOCATION</scope>
</reference>
<reference key="14">
    <citation type="journal article" date="2011" name="Curr. Biol.">
        <title>C. elegans Notch signaling regulates adult chemosensory response and larval molting quiescence.</title>
        <authorList>
            <person name="Singh K."/>
            <person name="Chao M.Y."/>
            <person name="Somers G.A."/>
            <person name="Komatsu H."/>
            <person name="Corkins M.E."/>
            <person name="Larkins-Ford J."/>
            <person name="Tucey T."/>
            <person name="Dionne H.M."/>
            <person name="Walsh M.B."/>
            <person name="Beaumont E.K."/>
            <person name="Hart D.P."/>
            <person name="Lockery S.R."/>
            <person name="Hart A.C."/>
        </authorList>
    </citation>
    <scope>FUNCTION</scope>
    <scope>DISRUPTION PHENOTYPE</scope>
    <scope>MUTAGENESIS OF 400-TRP--PHE-1429</scope>
</reference>
<reference key="15">
    <citation type="journal article" date="2016" name="Elife">
        <title>Boundary cells restrict dystroglycan trafficking to control basement membrane sliding during tissue remodeling.</title>
        <authorList>
            <person name="McClatchey S.T."/>
            <person name="Wang Z."/>
            <person name="Linden L.M."/>
            <person name="Hastie E.L."/>
            <person name="Wang L."/>
            <person name="Shen W."/>
            <person name="Chen A."/>
            <person name="Chi Q."/>
            <person name="Sherwood D.R."/>
        </authorList>
    </citation>
    <scope>FUNCTION</scope>
    <scope>DISRUPTION PHENOTYPE</scope>
</reference>
<reference key="16">
    <citation type="journal article" date="2020" name="Elife">
        <title>The CHORD protein CHP-1 regulates EGF receptor trafficking and signaling in C. elegans and in human cells.</title>
        <authorList>
            <person name="Haag A."/>
            <person name="Walser M."/>
            <person name="Henggeler A."/>
            <person name="Hajnal A."/>
        </authorList>
    </citation>
    <scope>SUBCELLULAR LOCATION</scope>
</reference>
<reference evidence="31" key="17">
    <citation type="journal article" date="2006" name="Cell">
        <title>Crystal structure of the CSL-Notch-Mastermind ternary complex bound to DNA.</title>
        <authorList>
            <person name="Wilson J.J."/>
            <person name="Kovall R.A."/>
        </authorList>
    </citation>
    <scope>X-RAY CRYSTALLOGRAPHY (3.12 ANGSTROMS) OF 933-1297 IN COMPLEX WITH LAG-1; LAG-3 AND DNA</scope>
</reference>
<reference evidence="32" key="18">
    <citation type="journal article" date="2008" name="J. Biol. Chem.">
        <title>RAM-induced allostery facilitates assembly of a notch pathway active transcription complex.</title>
        <authorList>
            <person name="Friedmann D.R."/>
            <person name="Wilson J.J."/>
            <person name="Kovall R.A."/>
        </authorList>
    </citation>
    <scope>X-RAY CRYSTALLOGRAPHY (2.21 ANGSTROMS) OF 937-951 IN COMPLEX WITH LAG-1 AND DNA</scope>
    <scope>FUNCTION</scope>
</reference>
<comment type="function">
    <text evidence="6 7 8 9 10 11 12 13 14 15 16 17 18 19 20 21 25">Essential signaling protein which has a major role in many developmental processes; involved in cell fate decisions that require cell-cell interactions (PubMed:3000611, PubMed:3419531). Probable membrane-bound receptor for putative ligands lag-2, apx-1, dsl-1 and osm-11 (PubMed:18036582, PubMed:18700817, PubMed:32053105, PubMed:3419531). Upon ligand activation, and releasing from the cell membrane, the lin-12/Notch intracellular domain (NICD) forms a transcriptional activator complex with lag-1 and lag-3 and regulates expression of various genes (PubMed:10830967, PubMed:16197940, PubMed:16530045, PubMed:18381292, PubMed:7566091, PubMed:8343960). Required for ventral cell fates in the postembryonic mesodermal lineage (M lineage) and in uterine precursor cells (PubMed:18036582, PubMed:3419531). Activity in cell fate decisions and tumorigenesis is negatively regulated by sel-10 (PubMed:9389650). Best known for involvement in cell-fate decisions during development, but also plays roles in other events (PubMed:10903169, PubMed:18599512, PubMed:21549604, PubMed:27661254). Regulates recovery from the dauer larval state (PubMed:18599512). Modulates chemosensory avoidance of octanol and quiescence during molting (PubMed:21549604). Promotes basement membrane mobility during tissue remodeling (PubMed:27661254). Involved in establishing left-right asymmetry during intestinal organogenesis (PubMed:10903169).</text>
</comment>
<comment type="subunit">
    <text evidence="13 21">May interact with dsl-1 (PubMed:18700817). May interact with lag-2 (PubMed:18700817). May interact with osm-11 (PubMed:18700817). Interacts with sel-10 (PubMed:9389650).</text>
</comment>
<comment type="subunit">
    <molecule>lin-12/Notch intracellular domain</molecule>
    <text evidence="9 11">When activated, the lin-12/Notch intracellular domain (NICD) can become a component of a complex consisting of at least the NICD, lag-1 and sel-8/lag-3 (PubMed:16530045, PubMed:18381292). The NICD probably facilitates ordered assembly of the ternary complex via allosteric interactions of its RBP-j associated molecule (RAM) domain with lag-1 (PubMed:16530045, PubMed:18381292).</text>
</comment>
<comment type="interaction">
    <interactant intactId="EBI-326049">
        <id>P14585</id>
    </interactant>
    <interactant intactId="EBI-323098">
        <id>Q93794</id>
        <label>sel-10</label>
    </interactant>
    <organismsDiffer>false</organismsDiffer>
    <experiments>3</experiments>
</comment>
<comment type="subcellular location">
    <subcellularLocation>
        <location evidence="17">Apical cell membrane</location>
        <topology evidence="3">Single-pass type I membrane protein</topology>
    </subcellularLocation>
    <text evidence="17">Localizes to the apical cell membrane of vulval precursor cells.</text>
</comment>
<comment type="subcellular location">
    <molecule>lin-12/Notch intracellular domain</molecule>
    <subcellularLocation>
        <location evidence="28">Nucleus</location>
    </subcellularLocation>
    <text evidence="28">Becomes localized to the nucleus during signal transduction.</text>
</comment>
<comment type="developmental stage">
    <text evidence="10">Expressed in the postembryonic mesodermal lineage (M lineage) at the 4-M to 8-M stages, at similar levels in both the dorsal and the ventral sides (PubMed:18036582). At the 10-M stage and later, expression becomes more restricted along the anterioposterior axis and gradually lost in the anterior M lineage cells, but retained in the posterior M lineage cells (PubMed:18036582).</text>
</comment>
<comment type="PTM">
    <text evidence="2 8 19">Upon binding its ligands, it is cleaved (S2 cleavage) in its extracellular domain, close to the transmembrane domain (By similarity). S2 cleavage is probably mediated by the metalloproteases adm-4 and sup-17 (PubMed:16197940). It is then cleaved (S3 cleavage) downstream of its transmembrane domain, releasing it from the cell membrane; S3 cleavage requires a multiprotein gamma-secretase complex, which may include presenilin sel-12 (PubMed:7566091).</text>
</comment>
<comment type="disruption phenotype">
    <text evidence="14 15">RNAi-mediated knockdown in cells of the pi uterine cell lineage results in impaired basement membrane mobility (PubMed:27661254). Knockdown on a glp-1 mutant background impairs octanol response when animals are shifted to the restrictive temperature (PubMed:21549604).</text>
</comment>
<comment type="similarity">
    <text evidence="27">Belongs to the NOTCH family.</text>
</comment>
<name>LIN12_CAEEL</name>
<keyword id="KW-0002">3D-structure</keyword>
<keyword id="KW-0010">Activator</keyword>
<keyword id="KW-0040">ANK repeat</keyword>
<keyword id="KW-1003">Cell membrane</keyword>
<keyword id="KW-0217">Developmental protein</keyword>
<keyword id="KW-0221">Differentiation</keyword>
<keyword id="KW-1015">Disulfide bond</keyword>
<keyword id="KW-0245">EGF-like domain</keyword>
<keyword id="KW-0325">Glycoprotein</keyword>
<keyword id="KW-0472">Membrane</keyword>
<keyword id="KW-0914">Notch signaling pathway</keyword>
<keyword id="KW-0539">Nucleus</keyword>
<keyword id="KW-1185">Reference proteome</keyword>
<keyword id="KW-0677">Repeat</keyword>
<keyword id="KW-0732">Signal</keyword>
<keyword id="KW-0804">Transcription</keyword>
<keyword id="KW-0805">Transcription regulation</keyword>
<keyword id="KW-0812">Transmembrane</keyword>
<keyword id="KW-1133">Transmembrane helix</keyword>
<gene>
    <name evidence="30" type="primary">lin-12</name>
    <name evidence="30" type="ORF">R107.8</name>
</gene>
<feature type="signal peptide" evidence="3">
    <location>
        <begin position="1"/>
        <end position="15"/>
    </location>
</feature>
<feature type="chain" id="PRO_0000007634" description="Protein lin-12">
    <location>
        <begin position="16"/>
        <end position="1429"/>
    </location>
</feature>
<feature type="chain" id="PRO_0000453171" description="lin-12/Notch intracellular domain" evidence="28 29">
    <location>
        <begin status="unknown"/>
        <end position="1429"/>
    </location>
</feature>
<feature type="topological domain" description="Extracellular" evidence="3">
    <location>
        <begin position="16"/>
        <end position="908"/>
    </location>
</feature>
<feature type="transmembrane region" description="Helical" evidence="3">
    <location>
        <begin position="909"/>
        <end position="931"/>
    </location>
</feature>
<feature type="topological domain" description="Cytoplasmic" evidence="3">
    <location>
        <begin position="932"/>
        <end position="1429"/>
    </location>
</feature>
<feature type="domain" description="EGF-like 1" evidence="4">
    <location>
        <begin position="20"/>
        <end position="61"/>
    </location>
</feature>
<feature type="domain" description="EGF-like 2" evidence="4">
    <location>
        <begin position="114"/>
        <end position="150"/>
    </location>
</feature>
<feature type="domain" description="EGF-like 3; calcium-binding" evidence="4">
    <location>
        <begin position="152"/>
        <end position="190"/>
    </location>
</feature>
<feature type="domain" description="EGF-like 4" evidence="4">
    <location>
        <begin position="201"/>
        <end position="246"/>
    </location>
</feature>
<feature type="domain" description="EGF-like 5" evidence="4">
    <location>
        <begin position="250"/>
        <end position="285"/>
    </location>
</feature>
<feature type="domain" description="EGF-like 6" evidence="4">
    <location>
        <begin position="287"/>
        <end position="323"/>
    </location>
</feature>
<feature type="domain" description="EGF-like 7" evidence="4">
    <location>
        <begin position="323"/>
        <end position="363"/>
    </location>
</feature>
<feature type="domain" description="EGF-like 8; calcium-binding" evidence="4">
    <location>
        <begin position="365"/>
        <end position="402"/>
    </location>
</feature>
<feature type="domain" description="EGF-like 9" evidence="4">
    <location>
        <begin position="404"/>
        <end position="441"/>
    </location>
</feature>
<feature type="domain" description="EGF-like 10" evidence="4">
    <location>
        <begin position="449"/>
        <end position="492"/>
    </location>
</feature>
<feature type="domain" description="EGF-like 11" evidence="4">
    <location>
        <begin position="503"/>
        <end position="541"/>
    </location>
</feature>
<feature type="domain" description="EGF-like 12" evidence="4">
    <location>
        <begin position="543"/>
        <end position="579"/>
    </location>
</feature>
<feature type="domain" description="EGF-like 13" evidence="4">
    <location>
        <begin position="582"/>
        <end position="619"/>
    </location>
</feature>
<feature type="repeat" description="LNR 1">
    <location>
        <begin position="638"/>
        <end position="674"/>
    </location>
</feature>
<feature type="repeat" description="LNR 2">
    <location>
        <begin position="678"/>
        <end position="709"/>
    </location>
</feature>
<feature type="repeat" description="LNR 3">
    <location>
        <begin position="716"/>
        <end position="754"/>
    </location>
</feature>
<feature type="repeat" description="ANK 1">
    <location>
        <begin position="1093"/>
        <end position="1122"/>
    </location>
</feature>
<feature type="repeat" description="ANK 2">
    <location>
        <begin position="1126"/>
        <end position="1158"/>
    </location>
</feature>
<feature type="repeat" description="ANK 3">
    <location>
        <begin position="1162"/>
        <end position="1194"/>
    </location>
</feature>
<feature type="repeat" description="ANK 4">
    <location>
        <begin position="1206"/>
        <end position="1236"/>
    </location>
</feature>
<feature type="repeat" description="ANK 5">
    <location>
        <begin position="1240"/>
        <end position="1269"/>
    </location>
</feature>
<feature type="region of interest" description="RAM domain" evidence="22 24">
    <location>
        <begin position="933"/>
        <end position="952"/>
    </location>
</feature>
<feature type="region of interest" description="Disordered" evidence="5">
    <location>
        <begin position="1308"/>
        <end position="1374"/>
    </location>
</feature>
<feature type="compositionally biased region" description="Basic residues" evidence="5">
    <location>
        <begin position="1319"/>
        <end position="1330"/>
    </location>
</feature>
<feature type="compositionally biased region" description="Polar residues" evidence="5">
    <location>
        <begin position="1361"/>
        <end position="1374"/>
    </location>
</feature>
<feature type="glycosylation site" description="N-linked (GlcNAc...) asparagine" evidence="3">
    <location>
        <position position="41"/>
    </location>
</feature>
<feature type="glycosylation site" description="N-linked (GlcNAc...) asparagine" evidence="3">
    <location>
        <position position="165"/>
    </location>
</feature>
<feature type="glycosylation site" description="N-linked (GlcNAc...) asparagine" evidence="3">
    <location>
        <position position="194"/>
    </location>
</feature>
<feature type="glycosylation site" description="N-linked (GlcNAc...) asparagine" evidence="3">
    <location>
        <position position="378"/>
    </location>
</feature>
<feature type="glycosylation site" description="N-linked (GlcNAc...) asparagine" evidence="3">
    <location>
        <position position="515"/>
    </location>
</feature>
<feature type="glycosylation site" description="N-linked (GlcNAc...) asparagine" evidence="3">
    <location>
        <position position="623"/>
    </location>
</feature>
<feature type="glycosylation site" description="N-linked (GlcNAc...) asparagine" evidence="3">
    <location>
        <position position="751"/>
    </location>
</feature>
<feature type="glycosylation site" description="N-linked (GlcNAc...) asparagine" evidence="3">
    <location>
        <position position="754"/>
    </location>
</feature>
<feature type="glycosylation site" description="N-linked (GlcNAc...) asparagine" evidence="3">
    <location>
        <position position="900"/>
    </location>
</feature>
<feature type="disulfide bond" evidence="1">
    <location>
        <begin position="24"/>
        <end position="35"/>
    </location>
</feature>
<feature type="disulfide bond" evidence="1">
    <location>
        <begin position="29"/>
        <end position="49"/>
    </location>
</feature>
<feature type="disulfide bond" evidence="1">
    <location>
        <begin position="51"/>
        <end position="60"/>
    </location>
</feature>
<feature type="disulfide bond" evidence="1">
    <location>
        <begin position="118"/>
        <end position="129"/>
    </location>
</feature>
<feature type="disulfide bond" evidence="1">
    <location>
        <begin position="123"/>
        <end position="138"/>
    </location>
</feature>
<feature type="disulfide bond" evidence="1">
    <location>
        <begin position="140"/>
        <end position="149"/>
    </location>
</feature>
<feature type="disulfide bond" evidence="1">
    <location>
        <begin position="156"/>
        <end position="169"/>
    </location>
</feature>
<feature type="disulfide bond" evidence="1">
    <location>
        <begin position="163"/>
        <end position="178"/>
    </location>
</feature>
<feature type="disulfide bond" evidence="1">
    <location>
        <begin position="180"/>
        <end position="189"/>
    </location>
</feature>
<feature type="disulfide bond" evidence="1">
    <location>
        <begin position="205"/>
        <end position="227"/>
    </location>
</feature>
<feature type="disulfide bond" evidence="1">
    <location>
        <begin position="221"/>
        <end position="234"/>
    </location>
</feature>
<feature type="disulfide bond" evidence="1">
    <location>
        <begin position="236"/>
        <end position="245"/>
    </location>
</feature>
<feature type="disulfide bond" evidence="1">
    <location>
        <begin position="254"/>
        <end position="264"/>
    </location>
</feature>
<feature type="disulfide bond" evidence="1">
    <location>
        <begin position="259"/>
        <end position="273"/>
    </location>
</feature>
<feature type="disulfide bond" evidence="1">
    <location>
        <begin position="275"/>
        <end position="284"/>
    </location>
</feature>
<feature type="disulfide bond" evidence="1">
    <location>
        <begin position="291"/>
        <end position="302"/>
    </location>
</feature>
<feature type="disulfide bond" evidence="1">
    <location>
        <begin position="296"/>
        <end position="311"/>
    </location>
</feature>
<feature type="disulfide bond" evidence="1">
    <location>
        <begin position="313"/>
        <end position="322"/>
    </location>
</feature>
<feature type="disulfide bond" evidence="1">
    <location>
        <begin position="327"/>
        <end position="339"/>
    </location>
</feature>
<feature type="disulfide bond" evidence="1">
    <location>
        <begin position="334"/>
        <end position="351"/>
    </location>
</feature>
<feature type="disulfide bond" evidence="1">
    <location>
        <begin position="353"/>
        <end position="362"/>
    </location>
</feature>
<feature type="disulfide bond" evidence="1">
    <location>
        <begin position="369"/>
        <end position="381"/>
    </location>
</feature>
<feature type="disulfide bond" evidence="1">
    <location>
        <begin position="375"/>
        <end position="390"/>
    </location>
</feature>
<feature type="disulfide bond" evidence="1">
    <location>
        <begin position="392"/>
        <end position="401"/>
    </location>
</feature>
<feature type="disulfide bond" evidence="1">
    <location>
        <begin position="408"/>
        <end position="419"/>
    </location>
</feature>
<feature type="disulfide bond" evidence="1">
    <location>
        <begin position="413"/>
        <end position="429"/>
    </location>
</feature>
<feature type="disulfide bond" evidence="1">
    <location>
        <begin position="431"/>
        <end position="440"/>
    </location>
</feature>
<feature type="disulfide bond" evidence="1">
    <location>
        <begin position="462"/>
        <end position="475"/>
    </location>
</feature>
<feature type="disulfide bond" evidence="1">
    <location>
        <begin position="469"/>
        <end position="480"/>
    </location>
</feature>
<feature type="disulfide bond" evidence="1">
    <location>
        <begin position="482"/>
        <end position="491"/>
    </location>
</feature>
<feature type="disulfide bond" evidence="1">
    <location>
        <begin position="507"/>
        <end position="518"/>
    </location>
</feature>
<feature type="disulfide bond" evidence="1">
    <location>
        <begin position="512"/>
        <end position="529"/>
    </location>
</feature>
<feature type="disulfide bond" evidence="1">
    <location>
        <begin position="531"/>
        <end position="540"/>
    </location>
</feature>
<feature type="disulfide bond" evidence="1">
    <location>
        <begin position="547"/>
        <end position="558"/>
    </location>
</feature>
<feature type="disulfide bond" evidence="1">
    <location>
        <begin position="552"/>
        <end position="567"/>
    </location>
</feature>
<feature type="disulfide bond" evidence="1">
    <location>
        <begin position="569"/>
        <end position="578"/>
    </location>
</feature>
<feature type="disulfide bond" evidence="1">
    <location>
        <begin position="586"/>
        <end position="597"/>
    </location>
</feature>
<feature type="disulfide bond" evidence="1">
    <location>
        <begin position="591"/>
        <end position="607"/>
    </location>
</feature>
<feature type="disulfide bond" evidence="1">
    <location>
        <begin position="609"/>
        <end position="618"/>
    </location>
</feature>
<feature type="disulfide bond" evidence="1">
    <location>
        <begin position="638"/>
        <end position="661"/>
    </location>
</feature>
<feature type="disulfide bond" evidence="1">
    <location>
        <begin position="643"/>
        <end position="656"/>
    </location>
</feature>
<feature type="disulfide bond" evidence="1">
    <location>
        <begin position="652"/>
        <end position="668"/>
    </location>
</feature>
<feature type="disulfide bond" evidence="1">
    <location>
        <begin position="678"/>
        <end position="702"/>
    </location>
</feature>
<feature type="disulfide bond" evidence="1">
    <location>
        <begin position="684"/>
        <end position="697"/>
    </location>
</feature>
<feature type="disulfide bond" evidence="1">
    <location>
        <begin position="693"/>
        <end position="709"/>
    </location>
</feature>
<feature type="disulfide bond" evidence="1">
    <location>
        <begin position="716"/>
        <end position="742"/>
    </location>
</feature>
<feature type="disulfide bond" evidence="1">
    <location>
        <begin position="724"/>
        <end position="737"/>
    </location>
</feature>
<feature type="disulfide bond" evidence="1">
    <location>
        <begin position="733"/>
        <end position="749"/>
    </location>
</feature>
<feature type="mutagenesis site" description="In n941; Increased total quiescence versus control animals. Affects cell fates of ventral, but not dorsal, postembryonic mesodermal lineage (M lineage). Similar, but enhanced phenotype seen when combined with RNAi-mediated knockdown of lag-2. On a sma-9 mutant background, reverses the dorsoventral polarity of the M lineage. Normal octanol response, but dramatically impaired when combined with RNAi-mediated knockdown of glp-1/Notch receptor." evidence="10 14">
    <location>
        <begin position="400"/>
        <end position="1429"/>
    </location>
</feature>
<feature type="strand" evidence="34">
    <location>
        <begin position="938"/>
        <end position="941"/>
    </location>
</feature>
<feature type="helix" evidence="33">
    <location>
        <begin position="1025"/>
        <end position="1031"/>
    </location>
</feature>
<feature type="strand" evidence="33">
    <location>
        <begin position="1032"/>
        <end position="1034"/>
    </location>
</feature>
<feature type="turn" evidence="33">
    <location>
        <begin position="1042"/>
        <end position="1047"/>
    </location>
</feature>
<feature type="helix" evidence="33">
    <location>
        <begin position="1056"/>
        <end position="1061"/>
    </location>
</feature>
<feature type="helix" evidence="33">
    <location>
        <begin position="1072"/>
        <end position="1082"/>
    </location>
</feature>
<feature type="helix" evidence="33">
    <location>
        <begin position="1097"/>
        <end position="1104"/>
    </location>
</feature>
<feature type="helix" evidence="33">
    <location>
        <begin position="1107"/>
        <end position="1115"/>
    </location>
</feature>
<feature type="helix" evidence="33">
    <location>
        <begin position="1130"/>
        <end position="1136"/>
    </location>
</feature>
<feature type="helix" evidence="33">
    <location>
        <begin position="1140"/>
        <end position="1146"/>
    </location>
</feature>
<feature type="helix" evidence="33">
    <location>
        <begin position="1150"/>
        <end position="1154"/>
    </location>
</feature>
<feature type="helix" evidence="33">
    <location>
        <begin position="1166"/>
        <end position="1172"/>
    </location>
</feature>
<feature type="helix" evidence="33">
    <location>
        <begin position="1178"/>
        <end position="1188"/>
    </location>
</feature>
<feature type="helix" evidence="33">
    <location>
        <begin position="1197"/>
        <end position="1199"/>
    </location>
</feature>
<feature type="strand" evidence="33">
    <location>
        <begin position="1201"/>
        <end position="1204"/>
    </location>
</feature>
<feature type="helix" evidence="33">
    <location>
        <begin position="1211"/>
        <end position="1215"/>
    </location>
</feature>
<feature type="helix" evidence="33">
    <location>
        <begin position="1220"/>
        <end position="1229"/>
    </location>
</feature>
<feature type="helix" evidence="33">
    <location>
        <begin position="1244"/>
        <end position="1251"/>
    </location>
</feature>
<feature type="helix" evidence="33">
    <location>
        <begin position="1254"/>
        <end position="1262"/>
    </location>
</feature>
<feature type="strand" evidence="33">
    <location>
        <begin position="1272"/>
        <end position="1274"/>
    </location>
</feature>
<feature type="helix" evidence="33">
    <location>
        <begin position="1277"/>
        <end position="1283"/>
    </location>
</feature>
<feature type="helix" evidence="33">
    <location>
        <begin position="1287"/>
        <end position="1294"/>
    </location>
</feature>
<evidence type="ECO:0000250" key="1"/>
<evidence type="ECO:0000250" key="2">
    <source>
        <dbReference type="UniProtKB" id="P07207"/>
    </source>
</evidence>
<evidence type="ECO:0000255" key="3"/>
<evidence type="ECO:0000255" key="4">
    <source>
        <dbReference type="PROSITE-ProRule" id="PRU00076"/>
    </source>
</evidence>
<evidence type="ECO:0000256" key="5">
    <source>
        <dbReference type="SAM" id="MobiDB-lite"/>
    </source>
</evidence>
<evidence type="ECO:0000269" key="6">
    <source>
    </source>
</evidence>
<evidence type="ECO:0000269" key="7">
    <source>
    </source>
</evidence>
<evidence type="ECO:0000269" key="8">
    <source>
    </source>
</evidence>
<evidence type="ECO:0000269" key="9">
    <source>
    </source>
</evidence>
<evidence type="ECO:0000269" key="10">
    <source>
    </source>
</evidence>
<evidence type="ECO:0000269" key="11">
    <source>
    </source>
</evidence>
<evidence type="ECO:0000269" key="12">
    <source>
    </source>
</evidence>
<evidence type="ECO:0000269" key="13">
    <source>
    </source>
</evidence>
<evidence type="ECO:0000269" key="14">
    <source>
    </source>
</evidence>
<evidence type="ECO:0000269" key="15">
    <source>
    </source>
</evidence>
<evidence type="ECO:0000269" key="16">
    <source>
    </source>
</evidence>
<evidence type="ECO:0000269" key="17">
    <source>
    </source>
</evidence>
<evidence type="ECO:0000269" key="18">
    <source>
    </source>
</evidence>
<evidence type="ECO:0000269" key="19">
    <source>
    </source>
</evidence>
<evidence type="ECO:0000269" key="20">
    <source>
    </source>
</evidence>
<evidence type="ECO:0000269" key="21">
    <source>
    </source>
</evidence>
<evidence type="ECO:0000303" key="22">
    <source>
    </source>
</evidence>
<evidence type="ECO:0000303" key="23">
    <source>
    </source>
</evidence>
<evidence type="ECO:0000303" key="24">
    <source>
    </source>
</evidence>
<evidence type="ECO:0000303" key="25">
    <source>
    </source>
</evidence>
<evidence type="ECO:0000303" key="26">
    <source>
    </source>
</evidence>
<evidence type="ECO:0000305" key="27"/>
<evidence type="ECO:0000305" key="28">
    <source>
    </source>
</evidence>
<evidence type="ECO:0000305" key="29">
    <source>
    </source>
</evidence>
<evidence type="ECO:0000312" key="30">
    <source>
        <dbReference type="WormBase" id="R107.8"/>
    </source>
</evidence>
<evidence type="ECO:0007744" key="31">
    <source>
        <dbReference type="PDB" id="2FO1"/>
    </source>
</evidence>
<evidence type="ECO:0007744" key="32">
    <source>
        <dbReference type="PDB" id="3BRD"/>
    </source>
</evidence>
<evidence type="ECO:0007829" key="33">
    <source>
        <dbReference type="PDB" id="2FO1"/>
    </source>
</evidence>
<evidence type="ECO:0007829" key="34">
    <source>
        <dbReference type="PDB" id="3BRD"/>
    </source>
</evidence>
<accession>P14585</accession>
<dbReference type="EMBL" id="M12069">
    <property type="protein sequence ID" value="AAA70191.1"/>
    <property type="molecule type" value="Genomic_DNA"/>
</dbReference>
<dbReference type="EMBL" id="BX284603">
    <property type="protein sequence ID" value="CAA78474.1"/>
    <property type="molecule type" value="Genomic_DNA"/>
</dbReference>
<dbReference type="PIR" id="S06434">
    <property type="entry name" value="S06434"/>
</dbReference>
<dbReference type="RefSeq" id="NP_499007.1">
    <property type="nucleotide sequence ID" value="NM_066606.7"/>
</dbReference>
<dbReference type="PDB" id="2FO1">
    <property type="method" value="X-ray"/>
    <property type="resolution" value="3.12 A"/>
    <property type="chains" value="E=933-1297"/>
</dbReference>
<dbReference type="PDB" id="3BRD">
    <property type="method" value="X-ray"/>
    <property type="resolution" value="2.21 A"/>
    <property type="chains" value="D=937-951"/>
</dbReference>
<dbReference type="PDB" id="3BRF">
    <property type="method" value="X-ray"/>
    <property type="resolution" value="2.47 A"/>
    <property type="chains" value="D=938-950"/>
</dbReference>
<dbReference type="PDBsum" id="2FO1"/>
<dbReference type="PDBsum" id="3BRD"/>
<dbReference type="PDBsum" id="3BRF"/>
<dbReference type="SMR" id="P14585"/>
<dbReference type="BioGRID" id="41481">
    <property type="interactions" value="28"/>
</dbReference>
<dbReference type="ComplexPortal" id="CPX-3152">
    <property type="entry name" value="CSL-Notch-Mastermind transcription factor complex"/>
</dbReference>
<dbReference type="DIP" id="DIP-25208N"/>
<dbReference type="ELM" id="P14585"/>
<dbReference type="FunCoup" id="P14585">
    <property type="interactions" value="1090"/>
</dbReference>
<dbReference type="IntAct" id="P14585">
    <property type="interactions" value="5"/>
</dbReference>
<dbReference type="MINT" id="P14585"/>
<dbReference type="STRING" id="6239.R107.8.1"/>
<dbReference type="GlyCosmos" id="P14585">
    <property type="glycosylation" value="9 sites, No reported glycans"/>
</dbReference>
<dbReference type="iPTMnet" id="P14585"/>
<dbReference type="PaxDb" id="6239-R107.8"/>
<dbReference type="EnsemblMetazoa" id="R107.8.1">
    <property type="protein sequence ID" value="R107.8.1"/>
    <property type="gene ID" value="WBGene00003001"/>
</dbReference>
<dbReference type="GeneID" id="176282"/>
<dbReference type="KEGG" id="cel:CELE_R107.8"/>
<dbReference type="UCSC" id="R107.8">
    <property type="organism name" value="c. elegans"/>
</dbReference>
<dbReference type="AGR" id="WB:WBGene00003001"/>
<dbReference type="CTD" id="176282"/>
<dbReference type="WormBase" id="R107.8">
    <property type="protein sequence ID" value="CE00274"/>
    <property type="gene ID" value="WBGene00003001"/>
    <property type="gene designation" value="lin-12"/>
</dbReference>
<dbReference type="eggNOG" id="KOG1217">
    <property type="taxonomic scope" value="Eukaryota"/>
</dbReference>
<dbReference type="GeneTree" id="ENSGT00980000198606"/>
<dbReference type="HOGENOM" id="CLU_005264_0_0_1"/>
<dbReference type="InParanoid" id="P14585"/>
<dbReference type="OMA" id="TCIDSPL"/>
<dbReference type="OrthoDB" id="430340at2759"/>
<dbReference type="PhylomeDB" id="P14585"/>
<dbReference type="Reactome" id="R-CEL-1912420">
    <property type="pathway name" value="Pre-NOTCH Processing in Golgi"/>
</dbReference>
<dbReference type="Reactome" id="R-CEL-9013700">
    <property type="pathway name" value="NOTCH4 Activation and Transmission of Signal to the Nucleus"/>
</dbReference>
<dbReference type="Reactome" id="R-CEL-9604323">
    <property type="pathway name" value="Negative regulation of NOTCH4 signaling"/>
</dbReference>
<dbReference type="SignaLink" id="P14585"/>
<dbReference type="EvolutionaryTrace" id="P14585"/>
<dbReference type="PRO" id="PR:P14585"/>
<dbReference type="Proteomes" id="UP000001940">
    <property type="component" value="Chromosome III"/>
</dbReference>
<dbReference type="Bgee" id="WBGene00003001">
    <property type="expression patterns" value="Expressed in embryo and 4 other cell types or tissues"/>
</dbReference>
<dbReference type="GO" id="GO:0016324">
    <property type="term" value="C:apical plasma membrane"/>
    <property type="evidence" value="ECO:0000314"/>
    <property type="project" value="WormBase"/>
</dbReference>
<dbReference type="GO" id="GO:1990433">
    <property type="term" value="C:CSL-Notch-Mastermind transcription factor complex"/>
    <property type="evidence" value="ECO:0000353"/>
    <property type="project" value="ComplexPortal"/>
</dbReference>
<dbReference type="GO" id="GO:0005634">
    <property type="term" value="C:nucleus"/>
    <property type="evidence" value="ECO:0000314"/>
    <property type="project" value="WormBase"/>
</dbReference>
<dbReference type="GO" id="GO:0005886">
    <property type="term" value="C:plasma membrane"/>
    <property type="evidence" value="ECO:0000314"/>
    <property type="project" value="WormBase"/>
</dbReference>
<dbReference type="GO" id="GO:0090575">
    <property type="term" value="C:RNA polymerase II transcription regulator complex"/>
    <property type="evidence" value="ECO:0000314"/>
    <property type="project" value="WormBase"/>
</dbReference>
<dbReference type="GO" id="GO:0005509">
    <property type="term" value="F:calcium ion binding"/>
    <property type="evidence" value="ECO:0007669"/>
    <property type="project" value="InterPro"/>
</dbReference>
<dbReference type="GO" id="GO:0140297">
    <property type="term" value="F:DNA-binding transcription factor binding"/>
    <property type="evidence" value="ECO:0000353"/>
    <property type="project" value="UniProtKB"/>
</dbReference>
<dbReference type="GO" id="GO:0005112">
    <property type="term" value="F:Notch binding"/>
    <property type="evidence" value="ECO:0000318"/>
    <property type="project" value="GO_Central"/>
</dbReference>
<dbReference type="GO" id="GO:0061629">
    <property type="term" value="F:RNA polymerase II-specific DNA-binding transcription factor binding"/>
    <property type="evidence" value="ECO:0000353"/>
    <property type="project" value="WormBase"/>
</dbReference>
<dbReference type="GO" id="GO:0004888">
    <property type="term" value="F:transmembrane signaling receptor activity"/>
    <property type="evidence" value="ECO:0000250"/>
    <property type="project" value="WormBase"/>
</dbReference>
<dbReference type="GO" id="GO:0001708">
    <property type="term" value="P:cell fate specification"/>
    <property type="evidence" value="ECO:0000315"/>
    <property type="project" value="UniProtKB"/>
</dbReference>
<dbReference type="GO" id="GO:0048858">
    <property type="term" value="P:cell projection morphogenesis"/>
    <property type="evidence" value="ECO:0000315"/>
    <property type="project" value="UniProtKB"/>
</dbReference>
<dbReference type="GO" id="GO:0043054">
    <property type="term" value="P:dauer exit"/>
    <property type="evidence" value="ECO:0000316"/>
    <property type="project" value="WormBase"/>
</dbReference>
<dbReference type="GO" id="GO:0018991">
    <property type="term" value="P:egg-laying behavior"/>
    <property type="evidence" value="ECO:0000315"/>
    <property type="project" value="WormBase"/>
</dbReference>
<dbReference type="GO" id="GO:0045746">
    <property type="term" value="P:negative regulation of Notch signaling pathway"/>
    <property type="evidence" value="ECO:0000318"/>
    <property type="project" value="GO_Central"/>
</dbReference>
<dbReference type="GO" id="GO:0002119">
    <property type="term" value="P:nematode larval development"/>
    <property type="evidence" value="ECO:0000316"/>
    <property type="project" value="WormBase"/>
</dbReference>
<dbReference type="GO" id="GO:0007219">
    <property type="term" value="P:Notch signaling pathway"/>
    <property type="evidence" value="ECO:0000315"/>
    <property type="project" value="WormBase"/>
</dbReference>
<dbReference type="GO" id="GO:0045893">
    <property type="term" value="P:positive regulation of DNA-templated transcription"/>
    <property type="evidence" value="ECO:0000303"/>
    <property type="project" value="ComplexPortal"/>
</dbReference>
<dbReference type="GO" id="GO:0048337">
    <property type="term" value="P:positive regulation of mesodermal cell fate specification"/>
    <property type="evidence" value="ECO:0000316"/>
    <property type="project" value="UniProtKB"/>
</dbReference>
<dbReference type="GO" id="GO:0110011">
    <property type="term" value="P:regulation of basement membrane organization"/>
    <property type="evidence" value="ECO:0000315"/>
    <property type="project" value="UniProtKB"/>
</dbReference>
<dbReference type="GO" id="GO:0042659">
    <property type="term" value="P:regulation of cell fate specification"/>
    <property type="evidence" value="ECO:0000315"/>
    <property type="project" value="UniProtKB"/>
</dbReference>
<dbReference type="GO" id="GO:0042661">
    <property type="term" value="P:regulation of mesodermal cell fate specification"/>
    <property type="evidence" value="ECO:0000315"/>
    <property type="project" value="UniProtKB"/>
</dbReference>
<dbReference type="GO" id="GO:0040028">
    <property type="term" value="P:regulation of vulval development"/>
    <property type="evidence" value="ECO:0000315"/>
    <property type="project" value="UniProtKB"/>
</dbReference>
<dbReference type="GO" id="GO:0030431">
    <property type="term" value="P:sleep"/>
    <property type="evidence" value="ECO:0000315"/>
    <property type="project" value="UniProtKB"/>
</dbReference>
<dbReference type="GO" id="GO:0040025">
    <property type="term" value="P:vulval development"/>
    <property type="evidence" value="ECO:0000315"/>
    <property type="project" value="WormBase"/>
</dbReference>
<dbReference type="CDD" id="cd00054">
    <property type="entry name" value="EGF_CA"/>
    <property type="match status" value="7"/>
</dbReference>
<dbReference type="FunFam" id="2.10.25.10:FF:000012">
    <property type="entry name" value="Delta-like protein"/>
    <property type="match status" value="1"/>
</dbReference>
<dbReference type="FunFam" id="2.10.25.10:FF:000934">
    <property type="entry name" value="Drosophila CRumBs homolog"/>
    <property type="match status" value="1"/>
</dbReference>
<dbReference type="FunFam" id="3.30.300.320:FF:000001">
    <property type="entry name" value="Neurogenic locus notch 1"/>
    <property type="match status" value="1"/>
</dbReference>
<dbReference type="FunFam" id="1.25.40.20:FF:001064">
    <property type="entry name" value="Protein lin-12"/>
    <property type="match status" value="1"/>
</dbReference>
<dbReference type="FunFam" id="2.10.25.10:FF:000471">
    <property type="entry name" value="Protein lin-12"/>
    <property type="match status" value="1"/>
</dbReference>
<dbReference type="FunFam" id="2.10.25.10:FF:001044">
    <property type="entry name" value="Protein lin-12"/>
    <property type="match status" value="1"/>
</dbReference>
<dbReference type="Gene3D" id="3.30.300.320">
    <property type="match status" value="1"/>
</dbReference>
<dbReference type="Gene3D" id="3.30.70.3310">
    <property type="match status" value="1"/>
</dbReference>
<dbReference type="Gene3D" id="1.25.40.20">
    <property type="entry name" value="Ankyrin repeat-containing domain"/>
    <property type="match status" value="1"/>
</dbReference>
<dbReference type="Gene3D" id="2.10.25.10">
    <property type="entry name" value="Laminin"/>
    <property type="match status" value="11"/>
</dbReference>
<dbReference type="IDEAL" id="IID50027"/>
<dbReference type="InterPro" id="IPR002110">
    <property type="entry name" value="Ankyrin_rpt"/>
</dbReference>
<dbReference type="InterPro" id="IPR036770">
    <property type="entry name" value="Ankyrin_rpt-contain_sf"/>
</dbReference>
<dbReference type="InterPro" id="IPR001881">
    <property type="entry name" value="EGF-like_Ca-bd_dom"/>
</dbReference>
<dbReference type="InterPro" id="IPR013032">
    <property type="entry name" value="EGF-like_CS"/>
</dbReference>
<dbReference type="InterPro" id="IPR000742">
    <property type="entry name" value="EGF-like_dom"/>
</dbReference>
<dbReference type="InterPro" id="IPR000152">
    <property type="entry name" value="EGF-type_Asp/Asn_hydroxyl_site"/>
</dbReference>
<dbReference type="InterPro" id="IPR018097">
    <property type="entry name" value="EGF_Ca-bd_CS"/>
</dbReference>
<dbReference type="InterPro" id="IPR013111">
    <property type="entry name" value="EGF_extracell"/>
</dbReference>
<dbReference type="InterPro" id="IPR009030">
    <property type="entry name" value="Growth_fac_rcpt_cys_sf"/>
</dbReference>
<dbReference type="InterPro" id="IPR035993">
    <property type="entry name" value="Notch-like_dom_sf"/>
</dbReference>
<dbReference type="InterPro" id="IPR049883">
    <property type="entry name" value="NOTCH1_EGF-like"/>
</dbReference>
<dbReference type="InterPro" id="IPR051022">
    <property type="entry name" value="Notch_Cell-Fate_Det"/>
</dbReference>
<dbReference type="InterPro" id="IPR000800">
    <property type="entry name" value="Notch_dom"/>
</dbReference>
<dbReference type="InterPro" id="IPR010660">
    <property type="entry name" value="Notch_NOD_dom"/>
</dbReference>
<dbReference type="InterPro" id="IPR011656">
    <property type="entry name" value="Notch_NODP_dom"/>
</dbReference>
<dbReference type="PANTHER" id="PTHR24049">
    <property type="entry name" value="CRUMBS FAMILY MEMBER"/>
    <property type="match status" value="1"/>
</dbReference>
<dbReference type="PANTHER" id="PTHR24049:SF22">
    <property type="entry name" value="DROSOPHILA CRUMBS HOMOLOG"/>
    <property type="match status" value="1"/>
</dbReference>
<dbReference type="Pfam" id="PF12796">
    <property type="entry name" value="Ank_2"/>
    <property type="match status" value="2"/>
</dbReference>
<dbReference type="Pfam" id="PF00008">
    <property type="entry name" value="EGF"/>
    <property type="match status" value="6"/>
</dbReference>
<dbReference type="Pfam" id="PF07974">
    <property type="entry name" value="EGF_2"/>
    <property type="match status" value="1"/>
</dbReference>
<dbReference type="Pfam" id="PF07645">
    <property type="entry name" value="EGF_CA"/>
    <property type="match status" value="1"/>
</dbReference>
<dbReference type="Pfam" id="PF12661">
    <property type="entry name" value="hEGF"/>
    <property type="match status" value="1"/>
</dbReference>
<dbReference type="Pfam" id="PF06816">
    <property type="entry name" value="NOD"/>
    <property type="match status" value="1"/>
</dbReference>
<dbReference type="Pfam" id="PF07684">
    <property type="entry name" value="NODP"/>
    <property type="match status" value="1"/>
</dbReference>
<dbReference type="Pfam" id="PF00066">
    <property type="entry name" value="Notch"/>
    <property type="match status" value="3"/>
</dbReference>
<dbReference type="PRINTS" id="PR01452">
    <property type="entry name" value="LNOTCHREPEAT"/>
</dbReference>
<dbReference type="PRINTS" id="PR01983">
    <property type="entry name" value="NOTCH"/>
</dbReference>
<dbReference type="SMART" id="SM00248">
    <property type="entry name" value="ANK"/>
    <property type="match status" value="6"/>
</dbReference>
<dbReference type="SMART" id="SM00181">
    <property type="entry name" value="EGF"/>
    <property type="match status" value="13"/>
</dbReference>
<dbReference type="SMART" id="SM00179">
    <property type="entry name" value="EGF_CA"/>
    <property type="match status" value="9"/>
</dbReference>
<dbReference type="SMART" id="SM00004">
    <property type="entry name" value="NL"/>
    <property type="match status" value="3"/>
</dbReference>
<dbReference type="SMART" id="SM01338">
    <property type="entry name" value="NOD"/>
    <property type="match status" value="1"/>
</dbReference>
<dbReference type="SMART" id="SM01339">
    <property type="entry name" value="NODP"/>
    <property type="match status" value="1"/>
</dbReference>
<dbReference type="SUPFAM" id="SSF48403">
    <property type="entry name" value="Ankyrin repeat"/>
    <property type="match status" value="1"/>
</dbReference>
<dbReference type="SUPFAM" id="SSF57196">
    <property type="entry name" value="EGF/Laminin"/>
    <property type="match status" value="9"/>
</dbReference>
<dbReference type="SUPFAM" id="SSF57184">
    <property type="entry name" value="Growth factor receptor domain"/>
    <property type="match status" value="1"/>
</dbReference>
<dbReference type="SUPFAM" id="SSF90193">
    <property type="entry name" value="Notch domain"/>
    <property type="match status" value="3"/>
</dbReference>
<dbReference type="PROSITE" id="PS50297">
    <property type="entry name" value="ANK_REP_REGION"/>
    <property type="match status" value="1"/>
</dbReference>
<dbReference type="PROSITE" id="PS50088">
    <property type="entry name" value="ANK_REPEAT"/>
    <property type="match status" value="3"/>
</dbReference>
<dbReference type="PROSITE" id="PS00010">
    <property type="entry name" value="ASX_HYDROXYL"/>
    <property type="match status" value="3"/>
</dbReference>
<dbReference type="PROSITE" id="PS00022">
    <property type="entry name" value="EGF_1"/>
    <property type="match status" value="12"/>
</dbReference>
<dbReference type="PROSITE" id="PS01186">
    <property type="entry name" value="EGF_2"/>
    <property type="match status" value="11"/>
</dbReference>
<dbReference type="PROSITE" id="PS50026">
    <property type="entry name" value="EGF_3"/>
    <property type="match status" value="13"/>
</dbReference>
<dbReference type="PROSITE" id="PS01187">
    <property type="entry name" value="EGF_CA"/>
    <property type="match status" value="2"/>
</dbReference>
<dbReference type="PROSITE" id="PS50258">
    <property type="entry name" value="LNR"/>
    <property type="match status" value="3"/>
</dbReference>
<organism>
    <name type="scientific">Caenorhabditis elegans</name>
    <dbReference type="NCBI Taxonomy" id="6239"/>
    <lineage>
        <taxon>Eukaryota</taxon>
        <taxon>Metazoa</taxon>
        <taxon>Ecdysozoa</taxon>
        <taxon>Nematoda</taxon>
        <taxon>Chromadorea</taxon>
        <taxon>Rhabditida</taxon>
        <taxon>Rhabditina</taxon>
        <taxon>Rhabditomorpha</taxon>
        <taxon>Rhabditoidea</taxon>
        <taxon>Rhabditidae</taxon>
        <taxon>Peloderinae</taxon>
        <taxon>Caenorhabditis</taxon>
    </lineage>
</organism>
<protein>
    <recommendedName>
        <fullName>Protein lin-12</fullName>
    </recommendedName>
    <alternativeName>
        <fullName>Abnormal cell lineage protein 12</fullName>
    </alternativeName>
    <alternativeName>
        <fullName evidence="26">Notch-like protein lin-12</fullName>
    </alternativeName>
    <component>
        <recommendedName>
            <fullName evidence="22 23">lin-12/Notch intracellular domain</fullName>
        </recommendedName>
    </component>
</protein>
<sequence length="1429" mass="157116">MRIPTICFLFLLISLSKSLHIGSCLGLICGRNGHCHAGPVNGTQTSYWCRCDEGFGGEYCEQQCDVSKCGADEKCVFDKDYRMETCVCKDCDINGNSLLKPSCPSGYGGDDCKTQGWCYPSVCMNGGQCIGAGNRAKCACPDGFKGERCELDVNECEENKNACGNRSTCMNTLGTYICVCPQGFLPPDCLKPGNTSTVEFKQPVCFLEISADHPDGRSMYCQNGGFCDKASSKCQCPPGYHGSTCELLEKEDSCASNPCSHGVCISFSGGFQCICDDGYSGSYCQEGKDNCVNNKCEAGSKCINGVNSYFCDCPPERTGPYCEKMDCSAIPDICNHGTCIDSPLSEKAFECQCEPGYEGILCEQDKNECLSENMCLNNGTCVNLPGSFRCDCARGFGGKWCDEPLNMCQDFHCENDGTCMHTSDHSPVCQCKNGFIGKRCEKECPIGFGGVRCDLRLEIGICSRQGGKCFNGGKCLSGFCVCPPDFTGNQCEVNRKNGKSSLSENLCLSDPCMNNATCIDVDAHIGYACICKQGFEGDICERHKDLCLENPCSNGGVCHQHRESFSCDCPPGFYGNGCEQEKMFRCLKSTCQNGGVCINEEEKGRKCECSYGFSGARCEEKINLTGFTEKDSLLRSVCEKRKCSERANDGNCDADCNYAACKFDGGDCSGKREPFSKCRYGNMCADFFANGVCNQACNNEECLYDGMDCLPAVVRCPVKIREHCASRFANGICDPECNTNGCGFDGGDCDNETNATIITNIRITVQMDPKEFQVTGGQSLMEISSALRVTVRIQRDEEGPLVFQWNGESEMDRVKMNERQLTEQHVLSTSISRKIKRSATNIGVVVYLEVQENCDTGKCLYKDAQSVVDSISARLAKKGIDSFGIPISEALVAEPRKSGNNTGFLSWNALLLIGAGCLIVMVVLMLGALPGNRTRKRRMINASVWMPPMENEEKNRKNHQSITSSQHSLLEASYDGYIKRQRNELQHYSLYPNPQGYGNGNDFLGDFNHTNLQIPTEPEPESPIKLHTEAAGSYAITEPITRESVNIIDPRHNRTVLHWIASNSSAEKSEDLIVHEAKECIAAGADVNAMDCDENTPLMLAVLARRRRLVAYLMKAGADPTIYNKSERSALHQAAANRDFGMMVYMLNSTKLKGDIEELDRNGMTALMIVAHNEGRDQVASAKLLVEKGAKVDYDGAARKDSEKYKGRTALHYAAQVSNMPIVKYLVGEKGSNKDKQDEDGKTPIMLAAQEGRIEVVMYLIQQGASVEAVDATDHTARQLAQANNHHNIVDIFDRCRPEREYSMDLHIQHTHQPQPSRKVTRAPKKQTSRSKKESASNSRDSTHLTPPPSDGSTSTPSPQHFMNTTHTTPTSLNYLSPEYQTEAGSSEAFQPQCGAFGNGEMWYTRASTSYTQMQNEPMTRYSEPAHYF</sequence>
<proteinExistence type="evidence at protein level"/>